<feature type="transit peptide" description="Chloroplast" evidence="1">
    <location>
        <begin position="1"/>
        <end position="47"/>
    </location>
</feature>
<feature type="chain" id="PRO_0000008829" description="Ferredoxin-1, chloroplastic">
    <location>
        <begin position="48"/>
        <end position="144"/>
    </location>
</feature>
<feature type="domain" description="2Fe-2S ferredoxin-type" evidence="2">
    <location>
        <begin position="50"/>
        <end position="140"/>
    </location>
</feature>
<feature type="binding site" evidence="2">
    <location>
        <position position="86"/>
    </location>
    <ligand>
        <name>[2Fe-2S] cluster</name>
        <dbReference type="ChEBI" id="CHEBI:190135"/>
    </ligand>
</feature>
<feature type="binding site" evidence="2">
    <location>
        <position position="91"/>
    </location>
    <ligand>
        <name>[2Fe-2S] cluster</name>
        <dbReference type="ChEBI" id="CHEBI:190135"/>
    </ligand>
</feature>
<feature type="binding site" evidence="2">
    <location>
        <position position="94"/>
    </location>
    <ligand>
        <name>[2Fe-2S] cluster</name>
        <dbReference type="ChEBI" id="CHEBI:190135"/>
    </ligand>
</feature>
<feature type="binding site" evidence="2">
    <location>
        <position position="124"/>
    </location>
    <ligand>
        <name>[2Fe-2S] cluster</name>
        <dbReference type="ChEBI" id="CHEBI:190135"/>
    </ligand>
</feature>
<proteinExistence type="evidence at transcript level"/>
<comment type="function">
    <text>Ferredoxins are iron-sulfur proteins that transfer electrons in a wide variety of metabolic reactions.</text>
</comment>
<comment type="cofactor">
    <cofactor>
        <name>[2Fe-2S] cluster</name>
        <dbReference type="ChEBI" id="CHEBI:190135"/>
    </cofactor>
    <text>Binds 1 [2Fe-2S] cluster.</text>
</comment>
<comment type="subcellular location">
    <subcellularLocation>
        <location>Plastid</location>
        <location>Chloroplast</location>
    </subcellularLocation>
</comment>
<comment type="similarity">
    <text evidence="3">Belongs to the 2Fe2S plant-type ferredoxin family.</text>
</comment>
<reference key="1">
    <citation type="journal article" date="1997" name="Plant Mol. Biol.">
        <title>Cloning and characterization of tomato leaf senescence-related cDNAs.</title>
        <authorList>
            <person name="John I."/>
            <person name="Hackett R."/>
            <person name="Cooper W."/>
            <person name="Drake R."/>
            <person name="Farrell A."/>
            <person name="Grierson D."/>
        </authorList>
    </citation>
    <scope>NUCLEOTIDE SEQUENCE [MRNA]</scope>
    <source>
        <strain>cv. Ailsa Craig</strain>
        <tissue>Leaf</tissue>
    </source>
</reference>
<name>FER1_SOLLC</name>
<accession>Q43517</accession>
<keyword id="KW-0001">2Fe-2S</keyword>
<keyword id="KW-0150">Chloroplast</keyword>
<keyword id="KW-0249">Electron transport</keyword>
<keyword id="KW-0408">Iron</keyword>
<keyword id="KW-0411">Iron-sulfur</keyword>
<keyword id="KW-0479">Metal-binding</keyword>
<keyword id="KW-0934">Plastid</keyword>
<keyword id="KW-1185">Reference proteome</keyword>
<keyword id="KW-0809">Transit peptide</keyword>
<keyword id="KW-0813">Transport</keyword>
<dbReference type="EMBL" id="Z75520">
    <property type="protein sequence ID" value="CAA99756.1"/>
    <property type="molecule type" value="mRNA"/>
</dbReference>
<dbReference type="PIR" id="T07175">
    <property type="entry name" value="T07175"/>
</dbReference>
<dbReference type="RefSeq" id="NP_001234059.1">
    <property type="nucleotide sequence ID" value="NM_001247130.2"/>
</dbReference>
<dbReference type="SMR" id="Q43517"/>
<dbReference type="FunCoup" id="Q43517">
    <property type="interactions" value="759"/>
</dbReference>
<dbReference type="STRING" id="4081.Q43517"/>
<dbReference type="PaxDb" id="4081-Solyc10g044520.1.1"/>
<dbReference type="GeneID" id="778301"/>
<dbReference type="KEGG" id="sly:778301"/>
<dbReference type="eggNOG" id="ENOG502S3RJ">
    <property type="taxonomic scope" value="Eukaryota"/>
</dbReference>
<dbReference type="HOGENOM" id="CLU_082632_1_1_1"/>
<dbReference type="InParanoid" id="Q43517"/>
<dbReference type="OrthoDB" id="1885901at2759"/>
<dbReference type="PhylomeDB" id="Q43517"/>
<dbReference type="Proteomes" id="UP000004994">
    <property type="component" value="Unplaced"/>
</dbReference>
<dbReference type="GO" id="GO:0009570">
    <property type="term" value="C:chloroplast stroma"/>
    <property type="evidence" value="ECO:0000318"/>
    <property type="project" value="GO_Central"/>
</dbReference>
<dbReference type="GO" id="GO:0051537">
    <property type="term" value="F:2 iron, 2 sulfur cluster binding"/>
    <property type="evidence" value="ECO:0007669"/>
    <property type="project" value="UniProtKB-KW"/>
</dbReference>
<dbReference type="GO" id="GO:0009055">
    <property type="term" value="F:electron transfer activity"/>
    <property type="evidence" value="ECO:0007669"/>
    <property type="project" value="InterPro"/>
</dbReference>
<dbReference type="GO" id="GO:0046872">
    <property type="term" value="F:metal ion binding"/>
    <property type="evidence" value="ECO:0007669"/>
    <property type="project" value="UniProtKB-KW"/>
</dbReference>
<dbReference type="GO" id="GO:0022900">
    <property type="term" value="P:electron transport chain"/>
    <property type="evidence" value="ECO:0007669"/>
    <property type="project" value="InterPro"/>
</dbReference>
<dbReference type="GO" id="GO:0006124">
    <property type="term" value="P:ferredoxin metabolic process"/>
    <property type="evidence" value="ECO:0007669"/>
    <property type="project" value="UniProtKB-ARBA"/>
</dbReference>
<dbReference type="CDD" id="cd00207">
    <property type="entry name" value="fer2"/>
    <property type="match status" value="1"/>
</dbReference>
<dbReference type="FunFam" id="3.10.20.30:FF:000014">
    <property type="entry name" value="Ferredoxin"/>
    <property type="match status" value="1"/>
</dbReference>
<dbReference type="Gene3D" id="3.10.20.30">
    <property type="match status" value="1"/>
</dbReference>
<dbReference type="InterPro" id="IPR036010">
    <property type="entry name" value="2Fe-2S_ferredoxin-like_sf"/>
</dbReference>
<dbReference type="InterPro" id="IPR001041">
    <property type="entry name" value="2Fe-2S_ferredoxin-type"/>
</dbReference>
<dbReference type="InterPro" id="IPR006058">
    <property type="entry name" value="2Fe2S_fd_BS"/>
</dbReference>
<dbReference type="InterPro" id="IPR012675">
    <property type="entry name" value="Beta-grasp_dom_sf"/>
</dbReference>
<dbReference type="InterPro" id="IPR010241">
    <property type="entry name" value="Fd_pln"/>
</dbReference>
<dbReference type="NCBIfam" id="TIGR02008">
    <property type="entry name" value="fdx_plant"/>
    <property type="match status" value="1"/>
</dbReference>
<dbReference type="PANTHER" id="PTHR43112">
    <property type="entry name" value="FERREDOXIN"/>
    <property type="match status" value="1"/>
</dbReference>
<dbReference type="PANTHER" id="PTHR43112:SF3">
    <property type="entry name" value="FERREDOXIN-2, CHLOROPLASTIC"/>
    <property type="match status" value="1"/>
</dbReference>
<dbReference type="Pfam" id="PF00111">
    <property type="entry name" value="Fer2"/>
    <property type="match status" value="1"/>
</dbReference>
<dbReference type="SUPFAM" id="SSF54292">
    <property type="entry name" value="2Fe-2S ferredoxin-like"/>
    <property type="match status" value="1"/>
</dbReference>
<dbReference type="PROSITE" id="PS00197">
    <property type="entry name" value="2FE2S_FER_1"/>
    <property type="match status" value="1"/>
</dbReference>
<dbReference type="PROSITE" id="PS51085">
    <property type="entry name" value="2FE2S_FER_2"/>
    <property type="match status" value="1"/>
</dbReference>
<gene>
    <name type="primary">SEND33</name>
</gene>
<sequence length="144" mass="15289">MASISGTMISTSFLPRKPAVTSLKAISNVGEALFGLKSGRNGRITCMASYKVKLITPEGPIEFECPDDVYILDQAEEEGHDLPYSCRAGSCSSCAGKVTAGSVDQSDGNFLDEDQEAAGFVLTCVAYPKGDVTIETHKEEELTA</sequence>
<evidence type="ECO:0000250" key="1"/>
<evidence type="ECO:0000255" key="2">
    <source>
        <dbReference type="PROSITE-ProRule" id="PRU00465"/>
    </source>
</evidence>
<evidence type="ECO:0000305" key="3"/>
<protein>
    <recommendedName>
        <fullName>Ferredoxin-1, chloroplastic</fullName>
    </recommendedName>
    <alternativeName>
        <fullName>Ferredoxin I</fullName>
    </alternativeName>
</protein>
<organism>
    <name type="scientific">Solanum lycopersicum</name>
    <name type="common">Tomato</name>
    <name type="synonym">Lycopersicon esculentum</name>
    <dbReference type="NCBI Taxonomy" id="4081"/>
    <lineage>
        <taxon>Eukaryota</taxon>
        <taxon>Viridiplantae</taxon>
        <taxon>Streptophyta</taxon>
        <taxon>Embryophyta</taxon>
        <taxon>Tracheophyta</taxon>
        <taxon>Spermatophyta</taxon>
        <taxon>Magnoliopsida</taxon>
        <taxon>eudicotyledons</taxon>
        <taxon>Gunneridae</taxon>
        <taxon>Pentapetalae</taxon>
        <taxon>asterids</taxon>
        <taxon>lamiids</taxon>
        <taxon>Solanales</taxon>
        <taxon>Solanaceae</taxon>
        <taxon>Solanoideae</taxon>
        <taxon>Solaneae</taxon>
        <taxon>Solanum</taxon>
        <taxon>Solanum subgen. Lycopersicon</taxon>
    </lineage>
</organism>